<proteinExistence type="inferred from homology"/>
<keyword id="KW-0378">Hydrolase</keyword>
<keyword id="KW-0546">Nucleotide metabolism</keyword>
<keyword id="KW-0547">Nucleotide-binding</keyword>
<evidence type="ECO:0000255" key="1">
    <source>
        <dbReference type="HAMAP-Rule" id="MF_00146"/>
    </source>
</evidence>
<dbReference type="EC" id="3.5.4.13" evidence="1"/>
<dbReference type="EMBL" id="AJ248288">
    <property type="protein sequence ID" value="CAB50685.1"/>
    <property type="molecule type" value="Genomic_DNA"/>
</dbReference>
<dbReference type="EMBL" id="HE613800">
    <property type="protein sequence ID" value="CCE71254.1"/>
    <property type="molecule type" value="Genomic_DNA"/>
</dbReference>
<dbReference type="PIR" id="G75030">
    <property type="entry name" value="G75030"/>
</dbReference>
<dbReference type="RefSeq" id="WP_010868899.1">
    <property type="nucleotide sequence ID" value="NC_000868.1"/>
</dbReference>
<dbReference type="SMR" id="Q9UXS8"/>
<dbReference type="STRING" id="272844.PAB1164"/>
<dbReference type="KEGG" id="pab:PAB1164"/>
<dbReference type="PATRIC" id="fig|272844.11.peg.1900"/>
<dbReference type="eggNOG" id="arCOG04048">
    <property type="taxonomic scope" value="Archaea"/>
</dbReference>
<dbReference type="HOGENOM" id="CLU_087476_3_1_2"/>
<dbReference type="OrthoDB" id="33242at2157"/>
<dbReference type="PhylomeDB" id="Q9UXS8"/>
<dbReference type="UniPathway" id="UPA00610">
    <property type="reaction ID" value="UER00665"/>
</dbReference>
<dbReference type="Proteomes" id="UP000000810">
    <property type="component" value="Chromosome"/>
</dbReference>
<dbReference type="Proteomes" id="UP000009139">
    <property type="component" value="Chromosome"/>
</dbReference>
<dbReference type="GO" id="GO:0008829">
    <property type="term" value="F:dCTP deaminase activity"/>
    <property type="evidence" value="ECO:0007669"/>
    <property type="project" value="UniProtKB-UniRule"/>
</dbReference>
<dbReference type="GO" id="GO:0000166">
    <property type="term" value="F:nucleotide binding"/>
    <property type="evidence" value="ECO:0007669"/>
    <property type="project" value="UniProtKB-KW"/>
</dbReference>
<dbReference type="GO" id="GO:0006226">
    <property type="term" value="P:dUMP biosynthetic process"/>
    <property type="evidence" value="ECO:0007669"/>
    <property type="project" value="UniProtKB-UniPathway"/>
</dbReference>
<dbReference type="GO" id="GO:0006229">
    <property type="term" value="P:dUTP biosynthetic process"/>
    <property type="evidence" value="ECO:0007669"/>
    <property type="project" value="UniProtKB-UniRule"/>
</dbReference>
<dbReference type="CDD" id="cd07557">
    <property type="entry name" value="trimeric_dUTPase"/>
    <property type="match status" value="1"/>
</dbReference>
<dbReference type="Gene3D" id="2.70.40.10">
    <property type="match status" value="1"/>
</dbReference>
<dbReference type="HAMAP" id="MF_00146">
    <property type="entry name" value="dCTP_deaminase"/>
    <property type="match status" value="1"/>
</dbReference>
<dbReference type="InterPro" id="IPR011962">
    <property type="entry name" value="dCTP_deaminase"/>
</dbReference>
<dbReference type="InterPro" id="IPR036157">
    <property type="entry name" value="dUTPase-like_sf"/>
</dbReference>
<dbReference type="InterPro" id="IPR033704">
    <property type="entry name" value="dUTPase_trimeric"/>
</dbReference>
<dbReference type="NCBIfam" id="TIGR02274">
    <property type="entry name" value="dCTP_deam"/>
    <property type="match status" value="1"/>
</dbReference>
<dbReference type="PANTHER" id="PTHR42680">
    <property type="entry name" value="DCTP DEAMINASE"/>
    <property type="match status" value="1"/>
</dbReference>
<dbReference type="PANTHER" id="PTHR42680:SF3">
    <property type="entry name" value="DCTP DEAMINASE"/>
    <property type="match status" value="1"/>
</dbReference>
<dbReference type="Pfam" id="PF22769">
    <property type="entry name" value="DCD"/>
    <property type="match status" value="1"/>
</dbReference>
<dbReference type="SUPFAM" id="SSF51283">
    <property type="entry name" value="dUTPase-like"/>
    <property type="match status" value="1"/>
</dbReference>
<protein>
    <recommendedName>
        <fullName evidence="1">dCTP deaminase</fullName>
        <ecNumber evidence="1">3.5.4.13</ecNumber>
    </recommendedName>
    <alternativeName>
        <fullName evidence="1">Deoxycytidine triphosphate deaminase</fullName>
    </alternativeName>
</protein>
<accession>Q9UXS8</accession>
<accession>G8ZKW3</accession>
<reference key="1">
    <citation type="journal article" date="2003" name="Mol. Microbiol.">
        <title>An integrated analysis of the genome of the hyperthermophilic archaeon Pyrococcus abyssi.</title>
        <authorList>
            <person name="Cohen G.N."/>
            <person name="Barbe V."/>
            <person name="Flament D."/>
            <person name="Galperin M."/>
            <person name="Heilig R."/>
            <person name="Lecompte O."/>
            <person name="Poch O."/>
            <person name="Prieur D."/>
            <person name="Querellou J."/>
            <person name="Ripp R."/>
            <person name="Thierry J.-C."/>
            <person name="Van der Oost J."/>
            <person name="Weissenbach J."/>
            <person name="Zivanovic Y."/>
            <person name="Forterre P."/>
        </authorList>
    </citation>
    <scope>NUCLEOTIDE SEQUENCE [LARGE SCALE GENOMIC DNA]</scope>
    <source>
        <strain>GE5 / Orsay</strain>
    </source>
</reference>
<reference key="2">
    <citation type="journal article" date="2012" name="Curr. Microbiol.">
        <title>Re-annotation of two hyperthermophilic archaea Pyrococcus abyssi GE5 and Pyrococcus furiosus DSM 3638.</title>
        <authorList>
            <person name="Gao J."/>
            <person name="Wang J."/>
        </authorList>
    </citation>
    <scope>GENOME REANNOTATION</scope>
    <source>
        <strain>GE5 / Orsay</strain>
    </source>
</reference>
<feature type="chain" id="PRO_0000156034" description="dCTP deaminase">
    <location>
        <begin position="1"/>
        <end position="154"/>
    </location>
</feature>
<feature type="binding site" evidence="1">
    <location>
        <begin position="79"/>
        <end position="84"/>
    </location>
    <ligand>
        <name>dCTP</name>
        <dbReference type="ChEBI" id="CHEBI:61481"/>
    </ligand>
</feature>
<feature type="binding site" evidence="1">
    <location>
        <position position="95"/>
    </location>
    <ligand>
        <name>dCTP</name>
        <dbReference type="ChEBI" id="CHEBI:61481"/>
    </ligand>
</feature>
<feature type="binding site" evidence="1">
    <location>
        <position position="124"/>
    </location>
    <ligand>
        <name>dCTP</name>
        <dbReference type="ChEBI" id="CHEBI:61481"/>
    </ligand>
</feature>
<feature type="binding site" evidence="1">
    <location>
        <position position="138"/>
    </location>
    <ligand>
        <name>dCTP</name>
        <dbReference type="ChEBI" id="CHEBI:61481"/>
    </ligand>
</feature>
<name>DCD_PYRAB</name>
<gene>
    <name evidence="1" type="primary">dcd</name>
    <name type="ordered locus">PYRAB17800</name>
    <name type="ORF">PAB1164</name>
</gene>
<organism>
    <name type="scientific">Pyrococcus abyssi (strain GE5 / Orsay)</name>
    <dbReference type="NCBI Taxonomy" id="272844"/>
    <lineage>
        <taxon>Archaea</taxon>
        <taxon>Methanobacteriati</taxon>
        <taxon>Methanobacteriota</taxon>
        <taxon>Thermococci</taxon>
        <taxon>Thermococcales</taxon>
        <taxon>Thermococcaceae</taxon>
        <taxon>Pyrococcus</taxon>
    </lineage>
</organism>
<comment type="function">
    <text evidence="1">Catalyzes the deamination of dCTP to dUTP.</text>
</comment>
<comment type="catalytic activity">
    <reaction evidence="1">
        <text>dCTP + H2O + H(+) = dUTP + NH4(+)</text>
        <dbReference type="Rhea" id="RHEA:22680"/>
        <dbReference type="ChEBI" id="CHEBI:15377"/>
        <dbReference type="ChEBI" id="CHEBI:15378"/>
        <dbReference type="ChEBI" id="CHEBI:28938"/>
        <dbReference type="ChEBI" id="CHEBI:61481"/>
        <dbReference type="ChEBI" id="CHEBI:61555"/>
        <dbReference type="EC" id="3.5.4.13"/>
    </reaction>
</comment>
<comment type="pathway">
    <text evidence="1">Pyrimidine metabolism; dUMP biosynthesis; dUMP from dCTP (dUTP route): step 1/2.</text>
</comment>
<comment type="subunit">
    <text evidence="1">Homotrimer.</text>
</comment>
<comment type="similarity">
    <text evidence="1">Belongs to the dCTP deaminase family.</text>
</comment>
<sequence>MLLPDWKIRKEILIKPFSEESLQPAGYDLRVGKEAYIQGKFIDVEKEGKVIIPPKEYALILTLERIKLPDDIMGDMKIRSSLAREGVLGSFAWVDPGWDGNLTLMLYNASEKEVILRYKERFVQIAFLRLEAPAKNPYRGNYQGSRRIVLSKRS</sequence>